<gene>
    <name evidence="21" type="primary">GABRA1</name>
</gene>
<feature type="signal peptide" evidence="4">
    <location>
        <begin position="1"/>
        <end position="27"/>
    </location>
</feature>
<feature type="chain" id="PRO_0000000428" description="Gamma-aminobutyric acid receptor subunit alpha-1">
    <location>
        <begin position="28"/>
        <end position="456"/>
    </location>
</feature>
<feature type="topological domain" description="Extracellular" evidence="20">
    <location>
        <begin position="28"/>
        <end position="253"/>
    </location>
</feature>
<feature type="transmembrane region" description="Helical" evidence="15 24 25">
    <location>
        <begin position="254"/>
        <end position="274"/>
    </location>
</feature>
<feature type="topological domain" description="Cytoplasmic" evidence="20">
    <location>
        <begin position="275"/>
        <end position="279"/>
    </location>
</feature>
<feature type="transmembrane region" description="Helical" evidence="15 24 25">
    <location>
        <begin position="280"/>
        <end position="301"/>
    </location>
</feature>
<feature type="topological domain" description="Extracellular" evidence="20">
    <location>
        <begin position="302"/>
        <end position="311"/>
    </location>
</feature>
<feature type="transmembrane region" description="Helical" evidence="15 24 25">
    <location>
        <begin position="312"/>
        <end position="333"/>
    </location>
</feature>
<feature type="topological domain" description="Cytoplasmic" evidence="20">
    <location>
        <begin position="334"/>
        <end position="421"/>
    </location>
</feature>
<feature type="transmembrane region" description="Helical" evidence="15 24 25">
    <location>
        <begin position="422"/>
        <end position="441"/>
    </location>
</feature>
<feature type="topological domain" description="Extracellular" evidence="20">
    <location>
        <begin position="442"/>
        <end position="456"/>
    </location>
</feature>
<feature type="binding site" evidence="15 24 25">
    <location>
        <position position="94"/>
    </location>
    <ligand>
        <name>4-aminobutanoate</name>
        <dbReference type="ChEBI" id="CHEBI:59888"/>
        <note>ligand shared with the neighboring beta subunit</note>
    </ligand>
</feature>
<feature type="binding site" evidence="3">
    <location>
        <position position="157"/>
    </location>
    <ligand>
        <name>4-aminobutanoate</name>
        <dbReference type="ChEBI" id="CHEBI:59888"/>
        <note>ligand shared with the neighboring beta subunit</note>
    </ligand>
</feature>
<feature type="binding site" evidence="16">
    <location>
        <position position="273"/>
    </location>
    <ligand>
        <name>3alpha-hydroxy-5alpha-pregnan-11,20-dione</name>
        <dbReference type="ChEBI" id="CHEBI:34531"/>
        <note>agonist</note>
    </ligand>
</feature>
<feature type="glycosylation site" description="N-linked (GlcNAc...) asparagine" evidence="4">
    <location>
        <position position="38"/>
    </location>
</feature>
<feature type="glycosylation site" description="N-linked (GlcNAc...) asparagine" evidence="15 17 24 25 26">
    <location>
        <position position="138"/>
    </location>
</feature>
<feature type="disulfide bond" evidence="15 17 24 25 26">
    <location>
        <begin position="166"/>
        <end position="180"/>
    </location>
</feature>
<feature type="sequence variant" id="VAR_071809" description="In DEE19; dbSNP:rs587777308." evidence="9">
    <original>R</original>
    <variation>Q</variation>
    <location>
        <position position="112"/>
    </location>
</feature>
<feature type="sequence variant" id="VAR_078222" description="In DEE19." evidence="12">
    <original>L</original>
    <variation>M</variation>
    <location>
        <position position="146"/>
    </location>
</feature>
<feature type="sequence variant" id="VAR_071810" description="In EIG13; the mutant protein is partially retained in the endoplasmic reticulum and has decreased expression at the plasma membrane; causes decreased current amplitude in response to GABA compared to wild-type and alters receptor gating kinetics including faster desensitization; dbSNP:rs587777364." evidence="7">
    <original>D</original>
    <variation>N</variation>
    <location>
        <position position="219"/>
    </location>
</feature>
<feature type="sequence variant" id="VAR_071811" description="In DEE19; dbSNP:rs587777307." evidence="9">
    <original>G</original>
    <variation>S</variation>
    <location>
        <position position="251"/>
    </location>
</feature>
<feature type="sequence variant" id="VAR_071812" description="In DEE19; dbSNP:rs587777309." evidence="9">
    <original>K</original>
    <variation>T</variation>
    <location>
        <position position="306"/>
    </location>
</feature>
<feature type="sequence variant" id="VAR_013642" description="In EJM5; dbSNP:rs121434579." evidence="5">
    <original>A</original>
    <variation>D</variation>
    <location>
        <position position="322"/>
    </location>
</feature>
<feature type="mutagenesis site" description="Reduced potentiation and activation by the agonist alphaxalone." evidence="16">
    <original>Q</original>
    <variation>L</variation>
    <location>
        <position position="269"/>
    </location>
</feature>
<feature type="mutagenesis site" description="Completely abolishes potentiation and activation by the agonist alphaxalone." evidence="16">
    <original>W</original>
    <variation>L</variation>
    <location>
        <position position="273"/>
    </location>
</feature>
<feature type="mutagenesis site" description="Reduced potentiation and activation by the agonist alphaxalone." evidence="16">
    <original>T</original>
    <variation>A</variation>
    <location>
        <position position="333"/>
    </location>
</feature>
<feature type="sequence conflict" description="In Ref. 1; CAA32874." evidence="20" ref="1">
    <original>W</original>
    <variation>R</variation>
    <location>
        <position position="122"/>
    </location>
</feature>
<feature type="sequence conflict" description="In Ref. 4; CAA31925." evidence="20" ref="4">
    <location>
        <begin position="128"/>
        <end position="140"/>
    </location>
</feature>
<feature type="sequence conflict" description="In Ref. 4; CAA31925." evidence="20" ref="4">
    <original>R</original>
    <variation>H</variation>
    <location>
        <position position="204"/>
    </location>
</feature>
<feature type="sequence conflict" description="In Ref. 4; CAA31925." evidence="20" ref="4">
    <original>W</original>
    <variation>WDW</variation>
    <location>
        <position position="315"/>
    </location>
</feature>
<feature type="sequence conflict" description="In Ref. 4; CAA31925." evidence="20" ref="4">
    <original>IKKN</original>
    <variation>FPNS</variation>
    <location>
        <begin position="362"/>
        <end position="365"/>
    </location>
</feature>
<feature type="helix" evidence="28">
    <location>
        <begin position="39"/>
        <end position="49"/>
    </location>
</feature>
<feature type="turn" evidence="29">
    <location>
        <begin position="50"/>
        <end position="52"/>
    </location>
</feature>
<feature type="turn" evidence="28">
    <location>
        <begin position="59"/>
        <end position="63"/>
    </location>
</feature>
<feature type="strand" evidence="28">
    <location>
        <begin position="66"/>
        <end position="81"/>
    </location>
</feature>
<feature type="turn" evidence="28">
    <location>
        <begin position="82"/>
        <end position="85"/>
    </location>
</feature>
<feature type="strand" evidence="28">
    <location>
        <begin position="86"/>
        <end position="98"/>
    </location>
</feature>
<feature type="helix" evidence="28">
    <location>
        <begin position="100"/>
        <end position="102"/>
    </location>
</feature>
<feature type="strand" evidence="28">
    <location>
        <begin position="109"/>
        <end position="113"/>
    </location>
</feature>
<feature type="helix" evidence="28">
    <location>
        <begin position="117"/>
        <end position="119"/>
    </location>
</feature>
<feature type="strand" evidence="28">
    <location>
        <begin position="126"/>
        <end position="128"/>
    </location>
</feature>
<feature type="strand" evidence="28">
    <location>
        <begin position="131"/>
        <end position="133"/>
    </location>
</feature>
<feature type="strand" evidence="28">
    <location>
        <begin position="139"/>
        <end position="141"/>
    </location>
</feature>
<feature type="strand" evidence="28">
    <location>
        <begin position="144"/>
        <end position="149"/>
    </location>
</feature>
<feature type="strand" evidence="28">
    <location>
        <begin position="152"/>
        <end position="165"/>
    </location>
</feature>
<feature type="turn" evidence="28">
    <location>
        <begin position="171"/>
        <end position="174"/>
    </location>
</feature>
<feature type="strand" evidence="28">
    <location>
        <begin position="177"/>
        <end position="188"/>
    </location>
</feature>
<feature type="turn" evidence="28">
    <location>
        <begin position="191"/>
        <end position="193"/>
    </location>
</feature>
<feature type="strand" evidence="28">
    <location>
        <begin position="194"/>
        <end position="200"/>
    </location>
</feature>
<feature type="helix" evidence="28">
    <location>
        <begin position="202"/>
        <end position="204"/>
    </location>
</feature>
<feature type="strand" evidence="28">
    <location>
        <begin position="205"/>
        <end position="208"/>
    </location>
</feature>
<feature type="strand" evidence="28">
    <location>
        <begin position="216"/>
        <end position="232"/>
    </location>
</feature>
<feature type="strand" evidence="28">
    <location>
        <begin position="235"/>
        <end position="248"/>
    </location>
</feature>
<feature type="helix" evidence="28">
    <location>
        <begin position="251"/>
        <end position="256"/>
    </location>
</feature>
<feature type="helix" evidence="28">
    <location>
        <begin position="258"/>
        <end position="270"/>
    </location>
</feature>
<feature type="helix" evidence="28">
    <location>
        <begin position="271"/>
        <end position="273"/>
    </location>
</feature>
<feature type="helix" evidence="28">
    <location>
        <begin position="279"/>
        <end position="301"/>
    </location>
</feature>
<feature type="helix" evidence="28">
    <location>
        <begin position="312"/>
        <end position="336"/>
    </location>
</feature>
<feature type="turn" evidence="28">
    <location>
        <begin position="337"/>
        <end position="339"/>
    </location>
</feature>
<feature type="strand" evidence="27">
    <location>
        <begin position="346"/>
        <end position="348"/>
    </location>
</feature>
<feature type="helix" evidence="28">
    <location>
        <begin position="419"/>
        <end position="444"/>
    </location>
</feature>
<protein>
    <recommendedName>
        <fullName>Gamma-aminobutyric acid receptor subunit alpha-1</fullName>
    </recommendedName>
    <alternativeName>
        <fullName evidence="18">GABA(A) receptor subunit alpha-1</fullName>
        <shortName evidence="19">GABAAR subunit alpha-1</shortName>
    </alternativeName>
</protein>
<comment type="function">
    <text evidence="1 2 3 8 11 15 17">Alpha subunit of the heteropentameric ligand-gated chloride channel gated by Gamma-aminobutyric acid (GABA), a major inhibitory neurotransmitter in the brain (PubMed:23909897, PubMed:25489750, PubMed:29950725, PubMed:30602789). GABA-gated chloride channels, also named GABA(A) receptors (GABAAR), consist of five subunits arranged around a central pore and contain GABA active binding site(s) located at the alpha and beta subunit interface(s) (PubMed:29950725, PubMed:30602789). When activated by GABA, GABAARs selectively allow the flow of chloride anions across the cell membrane down their electrochemical gradient (PubMed:23909897, PubMed:29950725, PubMed:30602789). Alpha-1/GABRA1-containing GABAARs are largely synaptic (By similarity). Chloride influx into the postsynaptic neuron following GABAAR opening decreases the neuron ability to generate a new action potential, thereby reducing nerve transmission (By similarity). GABAARs containing alpha-1 and beta-2 or -3 subunits exhibit synaptogenic activity; the gamma-2 subunit being necessary but not sufficient to induce rapid synaptic contacts formation (PubMed:23909897, PubMed:25489750). GABAARs function also as histamine receptor where histamine binds at the interface of two neighboring beta subunits and potentiates GABA response (By similarity). GABAARs containing alpha, beta and epsilon subunits also permit spontaneous chloride channel activity while preserving the structural information required for GABA-gated openings (By similarity). Alpha-1-mediated plasticity in the orbitofrontal cortex regulates context-dependent action selection (By similarity). Together with rho subunits, may also control neuronal and glial GABAergic transmission in the cerebellum (By similarity).</text>
</comment>
<comment type="catalytic activity">
    <reaction evidence="8 15 17">
        <text>chloride(in) = chloride(out)</text>
        <dbReference type="Rhea" id="RHEA:29823"/>
        <dbReference type="ChEBI" id="CHEBI:17996"/>
    </reaction>
</comment>
<comment type="activity regulation">
    <text evidence="3 15 16">Allosterically activated by benzodiazepines and the anesthetic alphaxalone (PubMed:29950725, PubMed:30266951). Allosterically activated by pentobarbital (By similarity). Inhibited by the antagonist bicuculline (PubMed:29950725). Potentiated by histamine (By similarity).</text>
</comment>
<comment type="subunit">
    <text evidence="2 3 13 14 15 16 17">Heteropentamer, formed by a combination of alpha (GABRA1-6), beta (GABRB1-3), gamma (GABRG1-3), delta (GABRD), epsilon (GABRE), rho (GABRR1-3), pi (GABRP) and theta (GABRQ) subunits, each subunit exhibiting distinct physiological and pharmacological properties (PubMed:29950725, PubMed:30266951, PubMed:30602789). Interacts with UBQLN1 (By similarity). Interacts with TRAK1 (By similarity). Interacts with KIF21B (By similarity). Identified in a complex of 720 kDa composed of LHFPL4, NLGN2, GABRA1, GABRB2, GABRG2 and GABRB3 (By similarity). Interacts with LHFPL4 (PubMed:28978485, PubMed:29742426). Interacts with NLGN2 (By similarity). Interacts with SHISA7; interaction leads regulation of GABAAR trafficking, channel deactivation kinetics and pharmacology (By similarity).</text>
</comment>
<comment type="subcellular location">
    <subcellularLocation>
        <location evidence="1">Postsynaptic cell membrane</location>
        <topology evidence="15">Multi-pass membrane protein</topology>
    </subcellularLocation>
    <subcellularLocation>
        <location evidence="10 11">Cell membrane</location>
        <topology evidence="15">Multi-pass membrane protein</topology>
    </subcellularLocation>
    <subcellularLocation>
        <location evidence="3">Cytoplasmic vesicle membrane</location>
        <topology evidence="15">Multi-pass membrane protein</topology>
    </subcellularLocation>
    <text evidence="3">Mainly located in GABAergic synapses in granule cells, and also in the extrasynaptic membrane at a lower concentration.</text>
</comment>
<comment type="domain">
    <text evidence="2">The extracellular domain contributes to synaptic contact formation.</text>
</comment>
<comment type="domain">
    <text evidence="15">The GABA-binding pockets are located at the interface between neighboring alpha and beta subunits.</text>
</comment>
<comment type="domain">
    <text evidence="15">GABAARs subunits share a common topological structure: a peptide sequence made up of a long extracellular N-terminal, four transmembrane domains, intracellular or cytoplasmic domain located between the third and the fourth transmembrane domains.</text>
</comment>
<comment type="disease" evidence="6">
    <disease id="DI-00299">
        <name>Epilepsy, childhood absence 4</name>
        <acronym>ECA4</acronym>
        <description>A subtype of idiopathic generalized epilepsy characterized by an onset at age 6-7 years, frequent absence seizures (several per day) and bilateral, synchronous, symmetric 3-Hz spike waves on EEG. Tonic-clonic seizures often develop in adolescence. Absence seizures may either remit or persist into adulthood.</description>
        <dbReference type="MIM" id="611136"/>
    </disease>
    <text>Disease susceptibility is associated with variants affecting the gene represented in this entry.</text>
</comment>
<comment type="disease" evidence="7">
    <disease id="DI-04084">
        <name>Epilepsy, idiopathic generalized 13</name>
        <acronym>EIG13</acronym>
        <description>A disorder characterized by recurring generalized seizures in the absence of detectable brain lesions and/or metabolic abnormalities. Generalized seizures arise diffusely and simultaneously from both hemispheres of the brain. Seizure types include juvenile myoclonic seizures, absence seizures, and generalized tonic-clonic seizures.</description>
        <dbReference type="MIM" id="611136"/>
    </disease>
    <text>Disease susceptibility is associated with variants affecting the gene represented in this entry.</text>
</comment>
<comment type="disease" evidence="5">
    <disease id="DI-03086">
        <name>Juvenile myoclonic epilepsy 5</name>
        <acronym>EJM5</acronym>
        <description>A subtype of idiopathic generalized epilepsy. Patients have afebrile seizures only, with onset in adolescence (rather than in childhood) and myoclonic jerks which usually occur after awakening and are triggered by sleep deprivation and fatigue.</description>
        <dbReference type="MIM" id="611136"/>
    </disease>
    <text>Disease susceptibility is associated with variants affecting the gene represented in this entry.</text>
</comment>
<comment type="disease" evidence="9 12">
    <disease id="DI-04092">
        <name>Developmental and epileptic encephalopathy 19</name>
        <acronym>DEE19</acronym>
        <description>A severe neurologic disorder characterized by onset of seizures in the first months of life and usually associated with EEG abnormalities. Affected infants have convulsive seizures (hemiclonic or generalized) that are often prolonged and triggered by fever. Other seizure types include focal, myoclonic, absence seizures, and drop attacks. Development is normal in the first year of life with later slowing and intellectual disability.</description>
        <dbReference type="MIM" id="615744"/>
    </disease>
    <text>The disease is caused by variants affecting the gene represented in this entry.</text>
</comment>
<comment type="miscellaneous">
    <text evidence="15 16">Functions as a receptor for diazepines and various anesthetics, such as pentobarbital; these are bound at a separate allosteric effector binding site.</text>
</comment>
<comment type="similarity">
    <text evidence="20">Belongs to the ligand-gated ion channel (TC 1.A.9) family. Gamma-aminobutyric acid receptor (TC 1.A.9.5) subfamily. GABRA1 sub-subfamily.</text>
</comment>
<comment type="online information" name="Protein Spotlight">
    <link uri="https://www.proteinspotlight.org/back_issues/056"/>
    <text>Forbidden fruit - Issue 56 of March 2005</text>
</comment>
<keyword id="KW-0002">3D-structure</keyword>
<keyword id="KW-1003">Cell membrane</keyword>
<keyword id="KW-0868">Chloride</keyword>
<keyword id="KW-0869">Chloride channel</keyword>
<keyword id="KW-0968">Cytoplasmic vesicle</keyword>
<keyword id="KW-0225">Disease variant</keyword>
<keyword id="KW-1015">Disulfide bond</keyword>
<keyword id="KW-0887">Epilepsy</keyword>
<keyword id="KW-0325">Glycoprotein</keyword>
<keyword id="KW-0407">Ion channel</keyword>
<keyword id="KW-0406">Ion transport</keyword>
<keyword id="KW-1071">Ligand-gated ion channel</keyword>
<keyword id="KW-0472">Membrane</keyword>
<keyword id="KW-0628">Postsynaptic cell membrane</keyword>
<keyword id="KW-1267">Proteomics identification</keyword>
<keyword id="KW-0675">Receptor</keyword>
<keyword id="KW-1185">Reference proteome</keyword>
<keyword id="KW-0732">Signal</keyword>
<keyword id="KW-0770">Synapse</keyword>
<keyword id="KW-0812">Transmembrane</keyword>
<keyword id="KW-1133">Transmembrane helix</keyword>
<keyword id="KW-0813">Transport</keyword>
<dbReference type="EMBL" id="X14766">
    <property type="protein sequence ID" value="CAA32874.1"/>
    <property type="molecule type" value="mRNA"/>
</dbReference>
<dbReference type="EMBL" id="CH471062">
    <property type="protein sequence ID" value="EAW61538.1"/>
    <property type="molecule type" value="Genomic_DNA"/>
</dbReference>
<dbReference type="EMBL" id="CH471062">
    <property type="protein sequence ID" value="EAW61539.1"/>
    <property type="molecule type" value="Genomic_DNA"/>
</dbReference>
<dbReference type="EMBL" id="BC030696">
    <property type="protein sequence ID" value="AAH30696.1"/>
    <property type="molecule type" value="mRNA"/>
</dbReference>
<dbReference type="EMBL" id="X13584">
    <property type="protein sequence ID" value="CAA31925.1"/>
    <property type="molecule type" value="mRNA"/>
</dbReference>
<dbReference type="CCDS" id="CCDS4357.1"/>
<dbReference type="PIR" id="A31588">
    <property type="entry name" value="A31588"/>
</dbReference>
<dbReference type="PIR" id="A60652">
    <property type="entry name" value="A60652"/>
</dbReference>
<dbReference type="RefSeq" id="NP_000797.2">
    <property type="nucleotide sequence ID" value="NM_000806.5"/>
</dbReference>
<dbReference type="RefSeq" id="NP_001121115.1">
    <property type="nucleotide sequence ID" value="NM_001127643.2"/>
</dbReference>
<dbReference type="RefSeq" id="NP_001121116.1">
    <property type="nucleotide sequence ID" value="NM_001127644.2"/>
</dbReference>
<dbReference type="RefSeq" id="NP_001121117.1">
    <property type="nucleotide sequence ID" value="NM_001127645.2"/>
</dbReference>
<dbReference type="RefSeq" id="NP_001121120.1">
    <property type="nucleotide sequence ID" value="NM_001127648.2"/>
</dbReference>
<dbReference type="PDB" id="6CDU">
    <property type="method" value="X-ray"/>
    <property type="resolution" value="3.45 A"/>
    <property type="chains" value="A/B/C/D/E/F/G/H/I/J=249-340, A/B/C/D/E/F/G/H/I/J=415-444"/>
</dbReference>
<dbReference type="PDB" id="6D1S">
    <property type="method" value="X-ray"/>
    <property type="resolution" value="3.20 A"/>
    <property type="chains" value="A/B/C/D/E/F/G/H/I/J=249-340, A/B/C/D/E/F/G/H/I/J=415-444"/>
</dbReference>
<dbReference type="PDB" id="6D6T">
    <property type="method" value="EM"/>
    <property type="resolution" value="3.80 A"/>
    <property type="chains" value="B/D=28-339, B/D=418-456"/>
</dbReference>
<dbReference type="PDB" id="6D6U">
    <property type="method" value="EM"/>
    <property type="resolution" value="3.80 A"/>
    <property type="chains" value="B/D=28-339, B/D=418-456"/>
</dbReference>
<dbReference type="PDB" id="6HUG">
    <property type="method" value="EM"/>
    <property type="resolution" value="3.10 A"/>
    <property type="chains" value="A/D=28-456"/>
</dbReference>
<dbReference type="PDB" id="6HUJ">
    <property type="method" value="EM"/>
    <property type="resolution" value="3.04 A"/>
    <property type="chains" value="A/D=1-456"/>
</dbReference>
<dbReference type="PDB" id="6HUK">
    <property type="method" value="EM"/>
    <property type="resolution" value="3.69 A"/>
    <property type="chains" value="A/D=1-456"/>
</dbReference>
<dbReference type="PDB" id="6HUO">
    <property type="method" value="EM"/>
    <property type="resolution" value="3.26 A"/>
    <property type="chains" value="A/D=1-456"/>
</dbReference>
<dbReference type="PDB" id="6HUP">
    <property type="method" value="EM"/>
    <property type="resolution" value="3.58 A"/>
    <property type="chains" value="A/D=1-456"/>
</dbReference>
<dbReference type="PDB" id="6I53">
    <property type="method" value="EM"/>
    <property type="resolution" value="3.20 A"/>
    <property type="chains" value="A/D=1-456"/>
</dbReference>
<dbReference type="PDB" id="6X3S">
    <property type="method" value="EM"/>
    <property type="resolution" value="3.12 A"/>
    <property type="chains" value="B/D=28-339, B/D=418-456"/>
</dbReference>
<dbReference type="PDB" id="6X3T">
    <property type="method" value="EM"/>
    <property type="resolution" value="2.55 A"/>
    <property type="chains" value="B/D=28-339, B/D=419-456"/>
</dbReference>
<dbReference type="PDB" id="6X3U">
    <property type="method" value="EM"/>
    <property type="resolution" value="3.49 A"/>
    <property type="chains" value="B/D=28-339, B/D=419-456"/>
</dbReference>
<dbReference type="PDB" id="6X3V">
    <property type="method" value="EM"/>
    <property type="resolution" value="3.50 A"/>
    <property type="chains" value="B/D=28-339, B/D=418-456"/>
</dbReference>
<dbReference type="PDB" id="6X3W">
    <property type="method" value="EM"/>
    <property type="resolution" value="3.30 A"/>
    <property type="chains" value="B/D=28-339, B/D=418-456"/>
</dbReference>
<dbReference type="PDB" id="6X3X">
    <property type="method" value="EM"/>
    <property type="resolution" value="2.92 A"/>
    <property type="chains" value="B/D=28-339, B/D=418-456"/>
</dbReference>
<dbReference type="PDB" id="6X3Z">
    <property type="method" value="EM"/>
    <property type="resolution" value="3.23 A"/>
    <property type="chains" value="B/D=28-339, B/D=418-456"/>
</dbReference>
<dbReference type="PDB" id="6X40">
    <property type="method" value="EM"/>
    <property type="resolution" value="2.86 A"/>
    <property type="chains" value="B/D=28-339, B/D=418-456"/>
</dbReference>
<dbReference type="PDB" id="7PBD">
    <property type="method" value="EM"/>
    <property type="resolution" value="3.04 A"/>
    <property type="chains" value="A/D=32-339, A/D=418-456"/>
</dbReference>
<dbReference type="PDB" id="7PBZ">
    <property type="method" value="EM"/>
    <property type="resolution" value="2.79 A"/>
    <property type="chains" value="A/D=32-339, A/D=418-456"/>
</dbReference>
<dbReference type="PDB" id="7PC0">
    <property type="method" value="EM"/>
    <property type="resolution" value="3.00 A"/>
    <property type="chains" value="A/D=32-339, A/D=418-456"/>
</dbReference>
<dbReference type="PDB" id="7QNE">
    <property type="method" value="EM"/>
    <property type="resolution" value="2.70 A"/>
    <property type="chains" value="A/D=1-456"/>
</dbReference>
<dbReference type="PDB" id="7T0W">
    <property type="method" value="EM"/>
    <property type="resolution" value="3.00 A"/>
    <property type="chains" value="B/D=28-339, B/D=418-445"/>
</dbReference>
<dbReference type="PDB" id="7T0Z">
    <property type="method" value="EM"/>
    <property type="resolution" value="3.00 A"/>
    <property type="chains" value="B/D=28-339, B/D=418-445"/>
</dbReference>
<dbReference type="PDB" id="8DD2">
    <property type="method" value="EM"/>
    <property type="resolution" value="2.90 A"/>
    <property type="chains" value="B/D=28-339"/>
</dbReference>
<dbReference type="PDB" id="8DD3">
    <property type="method" value="EM"/>
    <property type="resolution" value="2.90 A"/>
    <property type="chains" value="B/D=28-339"/>
</dbReference>
<dbReference type="PDB" id="8SGO">
    <property type="method" value="EM"/>
    <property type="resolution" value="2.65 A"/>
    <property type="chains" value="B/D=28-339, B/D=418-456"/>
</dbReference>
<dbReference type="PDB" id="8SI9">
    <property type="method" value="EM"/>
    <property type="resolution" value="2.98 A"/>
    <property type="chains" value="B/D=28-339, B/D=418-456"/>
</dbReference>
<dbReference type="PDB" id="8SID">
    <property type="method" value="EM"/>
    <property type="resolution" value="2.71 A"/>
    <property type="chains" value="B/D=28-339, B/D=418-456"/>
</dbReference>
<dbReference type="PDB" id="8VQY">
    <property type="method" value="EM"/>
    <property type="resolution" value="2.82 A"/>
    <property type="chains" value="B/D=28-339, B/D=418-456"/>
</dbReference>
<dbReference type="PDB" id="8VRN">
    <property type="method" value="EM"/>
    <property type="resolution" value="2.57 A"/>
    <property type="chains" value="B/D=28-339, B/D=418-456"/>
</dbReference>
<dbReference type="PDB" id="9CRS">
    <property type="method" value="EM"/>
    <property type="resolution" value="2.90 A"/>
    <property type="chains" value="B/D=28-456"/>
</dbReference>
<dbReference type="PDB" id="9CRV">
    <property type="method" value="EM"/>
    <property type="resolution" value="3.18 A"/>
    <property type="chains" value="B=28-456"/>
</dbReference>
<dbReference type="PDB" id="9CSB">
    <property type="method" value="EM"/>
    <property type="resolution" value="3.34 A"/>
    <property type="chains" value="B=28-456"/>
</dbReference>
<dbReference type="PDB" id="9CT0">
    <property type="method" value="EM"/>
    <property type="resolution" value="3.19 A"/>
    <property type="chains" value="B=28-456"/>
</dbReference>
<dbReference type="PDB" id="9CTJ">
    <property type="method" value="EM"/>
    <property type="resolution" value="3.74 A"/>
    <property type="chains" value="B=28-456"/>
</dbReference>
<dbReference type="PDB" id="9CTP">
    <property type="method" value="EM"/>
    <property type="resolution" value="3.62 A"/>
    <property type="chains" value="B=28-456"/>
</dbReference>
<dbReference type="PDB" id="9CTV">
    <property type="method" value="EM"/>
    <property type="resolution" value="3.36 A"/>
    <property type="chains" value="B=28-456"/>
</dbReference>
<dbReference type="PDB" id="9CX7">
    <property type="method" value="EM"/>
    <property type="resolution" value="3.30 A"/>
    <property type="chains" value="B=28-456"/>
</dbReference>
<dbReference type="PDB" id="9CXA">
    <property type="method" value="EM"/>
    <property type="resolution" value="3.04 A"/>
    <property type="chains" value="B/D=1-456"/>
</dbReference>
<dbReference type="PDB" id="9CXB">
    <property type="method" value="EM"/>
    <property type="resolution" value="3.33 A"/>
    <property type="chains" value="B=28-456"/>
</dbReference>
<dbReference type="PDB" id="9CXC">
    <property type="method" value="EM"/>
    <property type="resolution" value="3.30 A"/>
    <property type="chains" value="B=28-456"/>
</dbReference>
<dbReference type="PDB" id="9CXD">
    <property type="method" value="EM"/>
    <property type="resolution" value="3.36 A"/>
    <property type="chains" value="B=28-456"/>
</dbReference>
<dbReference type="PDB" id="9DRX">
    <property type="method" value="EM"/>
    <property type="resolution" value="2.95 A"/>
    <property type="chains" value="B/D=28-339, B/D=418-456"/>
</dbReference>
<dbReference type="PDB" id="9EQG">
    <property type="method" value="EM"/>
    <property type="resolution" value="2.40 A"/>
    <property type="chains" value="A/D=28-456"/>
</dbReference>
<dbReference type="PDB" id="9H9E">
    <property type="method" value="EM"/>
    <property type="resolution" value="3.60 A"/>
    <property type="chains" value="A/D=37-456"/>
</dbReference>
<dbReference type="PDBsum" id="6CDU"/>
<dbReference type="PDBsum" id="6D1S"/>
<dbReference type="PDBsum" id="6D6T"/>
<dbReference type="PDBsum" id="6D6U"/>
<dbReference type="PDBsum" id="6HUG"/>
<dbReference type="PDBsum" id="6HUJ"/>
<dbReference type="PDBsum" id="6HUK"/>
<dbReference type="PDBsum" id="6HUO"/>
<dbReference type="PDBsum" id="6HUP"/>
<dbReference type="PDBsum" id="6I53"/>
<dbReference type="PDBsum" id="6X3S"/>
<dbReference type="PDBsum" id="6X3T"/>
<dbReference type="PDBsum" id="6X3U"/>
<dbReference type="PDBsum" id="6X3V"/>
<dbReference type="PDBsum" id="6X3W"/>
<dbReference type="PDBsum" id="6X3X"/>
<dbReference type="PDBsum" id="6X3Z"/>
<dbReference type="PDBsum" id="6X40"/>
<dbReference type="PDBsum" id="7PBD"/>
<dbReference type="PDBsum" id="7PBZ"/>
<dbReference type="PDBsum" id="7PC0"/>
<dbReference type="PDBsum" id="7QNE"/>
<dbReference type="PDBsum" id="7T0W"/>
<dbReference type="PDBsum" id="7T0Z"/>
<dbReference type="PDBsum" id="8DD2"/>
<dbReference type="PDBsum" id="8DD3"/>
<dbReference type="PDBsum" id="8SGO"/>
<dbReference type="PDBsum" id="8SI9"/>
<dbReference type="PDBsum" id="8SID"/>
<dbReference type="PDBsum" id="8VQY"/>
<dbReference type="PDBsum" id="8VRN"/>
<dbReference type="PDBsum" id="9CRS"/>
<dbReference type="PDBsum" id="9CRV"/>
<dbReference type="PDBsum" id="9CSB"/>
<dbReference type="PDBsum" id="9CT0"/>
<dbReference type="PDBsum" id="9CTJ"/>
<dbReference type="PDBsum" id="9CTP"/>
<dbReference type="PDBsum" id="9CTV"/>
<dbReference type="PDBsum" id="9CX7"/>
<dbReference type="PDBsum" id="9CXA"/>
<dbReference type="PDBsum" id="9CXB"/>
<dbReference type="PDBsum" id="9CXC"/>
<dbReference type="PDBsum" id="9CXD"/>
<dbReference type="PDBsum" id="9DRX"/>
<dbReference type="PDBsum" id="9EQG"/>
<dbReference type="PDBsum" id="9H9E"/>
<dbReference type="EMDB" id="EMD-0279"/>
<dbReference type="EMDB" id="EMD-0280"/>
<dbReference type="EMDB" id="EMD-0282"/>
<dbReference type="EMDB" id="EMD-0283"/>
<dbReference type="EMDB" id="EMD-13290"/>
<dbReference type="EMDB" id="EMD-13314"/>
<dbReference type="EMDB" id="EMD-13315"/>
<dbReference type="EMDB" id="EMD-19907"/>
<dbReference type="EMDB" id="EMD-22031"/>
<dbReference type="EMDB" id="EMD-22032"/>
<dbReference type="EMDB" id="EMD-22033"/>
<dbReference type="EMDB" id="EMD-22034"/>
<dbReference type="EMDB" id="EMD-22035"/>
<dbReference type="EMDB" id="EMD-22036"/>
<dbReference type="EMDB" id="EMD-22037"/>
<dbReference type="EMDB" id="EMD-22038"/>
<dbReference type="EMDB" id="EMD-25583"/>
<dbReference type="EMDB" id="EMD-25585"/>
<dbReference type="EMDB" id="EMD-27332"/>
<dbReference type="EMDB" id="EMD-27333"/>
<dbReference type="EMDB" id="EMD-40462"/>
<dbReference type="EMDB" id="EMD-40503"/>
<dbReference type="EMDB" id="EMD-40506"/>
<dbReference type="EMDB" id="EMD-43475"/>
<dbReference type="EMDB" id="EMD-43485"/>
<dbReference type="EMDB" id="EMD-4411"/>
<dbReference type="EMDB" id="EMD-45878"/>
<dbReference type="EMDB" id="EMD-45884"/>
<dbReference type="EMDB" id="EMD-45890"/>
<dbReference type="EMDB" id="EMD-45894"/>
<dbReference type="EMDB" id="EMD-45908"/>
<dbReference type="EMDB" id="EMD-45914"/>
<dbReference type="EMDB" id="EMD-45920"/>
<dbReference type="EMDB" id="EMD-45980"/>
<dbReference type="EMDB" id="EMD-45983"/>
<dbReference type="EMDB" id="EMD-45984"/>
<dbReference type="EMDB" id="EMD-45985"/>
<dbReference type="EMDB" id="EMD-45986"/>
<dbReference type="EMDB" id="EMD-47132"/>
<dbReference type="EMDB" id="EMD-51963"/>
<dbReference type="EMDB" id="EMD-7816"/>
<dbReference type="EMDB" id="EMD-7817"/>
<dbReference type="SMR" id="P14867"/>
<dbReference type="BioGRID" id="108828">
    <property type="interactions" value="135"/>
</dbReference>
<dbReference type="ComplexPortal" id="CPX-2159">
    <property type="entry name" value="GABA-A receptor, alpha1-beta2-gamma2"/>
</dbReference>
<dbReference type="ComplexPortal" id="CPX-2167">
    <property type="entry name" value="GABA-A receptor, alpha1-beta3-gamma2"/>
</dbReference>
<dbReference type="ComplexPortal" id="CPX-8578">
    <property type="entry name" value="GABA-A receptor, alpha1-beta2-delta"/>
</dbReference>
<dbReference type="ComplexPortal" id="CPX-8636">
    <property type="entry name" value="GABA-A receptor, alpha1-beta1-gamma2"/>
</dbReference>
<dbReference type="ComplexPortal" id="CPX-8729">
    <property type="entry name" value="GABA-A receptor, alpha1-beta3 complex"/>
</dbReference>
<dbReference type="CORUM" id="P14867"/>
<dbReference type="FunCoup" id="P14867">
    <property type="interactions" value="609"/>
</dbReference>
<dbReference type="IntAct" id="P14867">
    <property type="interactions" value="7"/>
</dbReference>
<dbReference type="MINT" id="P14867"/>
<dbReference type="STRING" id="9606.ENSP00000393097"/>
<dbReference type="BindingDB" id="P14867"/>
<dbReference type="ChEMBL" id="CHEMBL1962"/>
<dbReference type="DrugBank" id="DB12537">
    <property type="generic name" value="1,2-Benzodiazepine"/>
</dbReference>
<dbReference type="DrugBank" id="DB00546">
    <property type="generic name" value="Adinazolam"/>
</dbReference>
<dbReference type="DrugBank" id="DB06579">
    <property type="generic name" value="Adipiplon"/>
</dbReference>
<dbReference type="DrugBank" id="DB00404">
    <property type="generic name" value="Alprazolam"/>
</dbReference>
<dbReference type="DrugBank" id="DB01351">
    <property type="generic name" value="Amobarbital"/>
</dbReference>
<dbReference type="DrugBank" id="DB00543">
    <property type="generic name" value="Amoxapine"/>
</dbReference>
<dbReference type="DrugBank" id="DB11901">
    <property type="generic name" value="Apalutamide"/>
</dbReference>
<dbReference type="DrugBank" id="DB01352">
    <property type="generic name" value="Aprobarbital"/>
</dbReference>
<dbReference type="DrugBank" id="DB01483">
    <property type="generic name" value="Barbital"/>
</dbReference>
<dbReference type="DrugBank" id="DB14719">
    <property type="generic name" value="Bentazepam"/>
</dbReference>
<dbReference type="DrugBank" id="DB11859">
    <property type="generic name" value="Brexanolone"/>
</dbReference>
<dbReference type="DrugBank" id="DB01558">
    <property type="generic name" value="Bromazepam"/>
</dbReference>
<dbReference type="DrugBank" id="DB09017">
    <property type="generic name" value="Brotizolam"/>
</dbReference>
<dbReference type="DrugBank" id="DB00237">
    <property type="generic name" value="Butabarbital"/>
</dbReference>
<dbReference type="DrugBank" id="DB00241">
    <property type="generic name" value="Butalbital"/>
</dbReference>
<dbReference type="DrugBank" id="DB01353">
    <property type="generic name" value="Butobarbital"/>
</dbReference>
<dbReference type="DrugBank" id="DB01489">
    <property type="generic name" value="Camazepam"/>
</dbReference>
<dbReference type="DrugBank" id="DB00395">
    <property type="generic name" value="Carisoprodol"/>
</dbReference>
<dbReference type="DrugBank" id="DB06119">
    <property type="generic name" value="Cenobamate"/>
</dbReference>
<dbReference type="DrugBank" id="DB00475">
    <property type="generic name" value="Chlordiazepoxide"/>
</dbReference>
<dbReference type="DrugBank" id="DB14715">
    <property type="generic name" value="Cinazepam"/>
</dbReference>
<dbReference type="DrugBank" id="DB01594">
    <property type="generic name" value="Cinolazepam"/>
</dbReference>
<dbReference type="DrugBank" id="DB00349">
    <property type="generic name" value="Clobazam"/>
</dbReference>
<dbReference type="DrugBank" id="DB06470">
    <property type="generic name" value="Clomethiazole"/>
</dbReference>
<dbReference type="DrugBank" id="DB01068">
    <property type="generic name" value="Clonazepam"/>
</dbReference>
<dbReference type="DrugBank" id="DB00628">
    <property type="generic name" value="Clorazepic acid"/>
</dbReference>
<dbReference type="DrugBank" id="DB01559">
    <property type="generic name" value="Clotiazepam"/>
</dbReference>
<dbReference type="DrugBank" id="DB01553">
    <property type="generic name" value="Cloxazolam"/>
</dbReference>
<dbReference type="DrugBank" id="DB00363">
    <property type="generic name" value="Clozapine"/>
</dbReference>
<dbReference type="DrugBank" id="DB01511">
    <property type="generic name" value="Delorazepam"/>
</dbReference>
<dbReference type="DrugBank" id="DB01189">
    <property type="generic name" value="Desflurane"/>
</dbReference>
<dbReference type="DrugBank" id="DB00829">
    <property type="generic name" value="Diazepam"/>
</dbReference>
<dbReference type="DrugBank" id="DB01496">
    <property type="generic name" value="Dihydro-2-thioxo-5-((5-(2-(trifluoromethyl)phenyl)-2-furanyl)methyl)-4,6(1H,5H)-pyrimidinedione"/>
</dbReference>
<dbReference type="DrugBank" id="DB01341">
    <property type="generic name" value="Dihydroquinidine barbiturate"/>
</dbReference>
<dbReference type="DrugBank" id="DB13837">
    <property type="generic name" value="Doxefazepam"/>
</dbReference>
<dbReference type="DrugBank" id="DB12308">
    <property type="generic name" value="Eltanolone"/>
</dbReference>
<dbReference type="DrugBank" id="DB00228">
    <property type="generic name" value="Enflurane"/>
</dbReference>
<dbReference type="DrugBank" id="DB01215">
    <property type="generic name" value="Estazolam"/>
</dbReference>
<dbReference type="DrugBank" id="DB00402">
    <property type="generic name" value="Eszopiclone"/>
</dbReference>
<dbReference type="DrugBank" id="DB00898">
    <property type="generic name" value="Ethanol"/>
</dbReference>
<dbReference type="DrugBank" id="DB00189">
    <property type="generic name" value="Ethchlorvynol"/>
</dbReference>
<dbReference type="DrugBank" id="DB01545">
    <property type="generic name" value="Ethyl loflazepate"/>
</dbReference>
<dbReference type="DrugBank" id="DB09166">
    <property type="generic name" value="Etizolam"/>
</dbReference>
<dbReference type="DrugBank" id="DB00292">
    <property type="generic name" value="Etomidate"/>
</dbReference>
<dbReference type="DrugBank" id="DB05721">
    <property type="generic name" value="EVT 201"/>
</dbReference>
<dbReference type="DrugBank" id="DB07776">
    <property type="generic name" value="Flavone"/>
</dbReference>
<dbReference type="DrugBank" id="DB01567">
    <property type="generic name" value="Fludiazepam"/>
</dbReference>
<dbReference type="DrugBank" id="DB01205">
    <property type="generic name" value="Flumazenil"/>
</dbReference>
<dbReference type="DrugBank" id="DB01544">
    <property type="generic name" value="Flunitrazepam"/>
</dbReference>
<dbReference type="DrugBank" id="DB00690">
    <property type="generic name" value="Flurazepam"/>
</dbReference>
<dbReference type="DrugBank" id="DB02530">
    <property type="generic name" value="gamma-Aminobutyric acid"/>
</dbReference>
<dbReference type="DrugBank" id="DB05087">
    <property type="generic name" value="Ganaxolone"/>
</dbReference>
<dbReference type="DrugBank" id="DB01381">
    <property type="generic name" value="Ginkgo biloba"/>
</dbReference>
<dbReference type="DrugBank" id="DB01437">
    <property type="generic name" value="Glutethimide"/>
</dbReference>
<dbReference type="DrugBank" id="DB00801">
    <property type="generic name" value="Halazepam"/>
</dbReference>
<dbReference type="DrugBank" id="DB01159">
    <property type="generic name" value="Halothane"/>
</dbReference>
<dbReference type="DrugBank" id="DB01354">
    <property type="generic name" value="Heptabarbital"/>
</dbReference>
<dbReference type="DrugBank" id="DB01355">
    <property type="generic name" value="Hexobarbital"/>
</dbReference>
<dbReference type="DrugBank" id="DB12590">
    <property type="generic name" value="Indiplon"/>
</dbReference>
<dbReference type="DrugBank" id="DB00753">
    <property type="generic name" value="Isoflurane"/>
</dbReference>
<dbReference type="DrugBank" id="DB01587">
    <property type="generic name" value="Ketazolam"/>
</dbReference>
<dbReference type="DrugBank" id="DB00555">
    <property type="generic name" value="Lamotrigine"/>
</dbReference>
<dbReference type="DrugBank" id="DB13643">
    <property type="generic name" value="Loprazolam"/>
</dbReference>
<dbReference type="DrugBank" id="DB00186">
    <property type="generic name" value="Lorazepam"/>
</dbReference>
<dbReference type="DrugBank" id="DB13872">
    <property type="generic name" value="Lormetazepam"/>
</dbReference>
<dbReference type="DrugBank" id="DB13437">
    <property type="generic name" value="Medazepam"/>
</dbReference>
<dbReference type="DrugBank" id="DB00603">
    <property type="generic name" value="Medroxyprogesterone acetate"/>
</dbReference>
<dbReference type="DrugBank" id="DB01043">
    <property type="generic name" value="Memantine"/>
</dbReference>
<dbReference type="DrugBank" id="DB00371">
    <property type="generic name" value="Meprobamate"/>
</dbReference>
<dbReference type="DrugBank" id="DB00463">
    <property type="generic name" value="Metharbital"/>
</dbReference>
<dbReference type="DrugBank" id="DB00474">
    <property type="generic name" value="Methohexital"/>
</dbReference>
<dbReference type="DrugBank" id="DB01028">
    <property type="generic name" value="Methoxyflurane"/>
</dbReference>
<dbReference type="DrugBank" id="DB00849">
    <property type="generic name" value="Methylphenobarbital"/>
</dbReference>
<dbReference type="DrugBank" id="DB01107">
    <property type="generic name" value="Methyprylon"/>
</dbReference>
<dbReference type="DrugBank" id="DB15489">
    <property type="generic name" value="Mexazolam"/>
</dbReference>
<dbReference type="DrugBank" id="DB00683">
    <property type="generic name" value="Midazolam"/>
</dbReference>
<dbReference type="DrugBank" id="DB12458">
    <property type="generic name" value="Muscimol"/>
</dbReference>
<dbReference type="DrugBank" id="DB01595">
    <property type="generic name" value="Nitrazepam"/>
</dbReference>
<dbReference type="DrugBank" id="DB14028">
    <property type="generic name" value="Nordazepam"/>
</dbReference>
<dbReference type="DrugBank" id="DB00334">
    <property type="generic name" value="Olanzapine"/>
</dbReference>
<dbReference type="DrugBank" id="DB00842">
    <property type="generic name" value="Oxazepam"/>
</dbReference>
<dbReference type="DrugBank" id="DB14672">
    <property type="generic name" value="Oxazepam acetate"/>
</dbReference>
<dbReference type="DrugBank" id="DB00312">
    <property type="generic name" value="Pentobarbital"/>
</dbReference>
<dbReference type="DrugBank" id="DB01174">
    <property type="generic name" value="Phenobarbital"/>
</dbReference>
<dbReference type="DrugBank" id="DB00252">
    <property type="generic name" value="Phenytoin"/>
</dbReference>
<dbReference type="DrugBank" id="DB00466">
    <property type="generic name" value="Picrotoxin"/>
</dbReference>
<dbReference type="DrugBank" id="DB13335">
    <property type="generic name" value="Pinazepam"/>
</dbReference>
<dbReference type="DrugBank" id="DB01708">
    <property type="generic name" value="Prasterone"/>
</dbReference>
<dbReference type="DrugBank" id="DB01588">
    <property type="generic name" value="Prazepam"/>
</dbReference>
<dbReference type="DrugBank" id="DB00794">
    <property type="generic name" value="Primidone"/>
</dbReference>
<dbReference type="DrugBank" id="DB00837">
    <property type="generic name" value="Progabide"/>
</dbReference>
<dbReference type="DrugBank" id="DB00818">
    <property type="generic name" value="Propofol"/>
</dbReference>
<dbReference type="DrugBank" id="DB01589">
    <property type="generic name" value="Quazepam"/>
</dbReference>
<dbReference type="DrugBank" id="DB01346">
    <property type="generic name" value="Quinidine barbiturate"/>
</dbReference>
<dbReference type="DrugBank" id="DB12404">
    <property type="generic name" value="Remimazolam"/>
</dbReference>
<dbReference type="DrugBank" id="DB00418">
    <property type="generic name" value="Secobarbital"/>
</dbReference>
<dbReference type="DrugBank" id="DB01236">
    <property type="generic name" value="Sevoflurane"/>
</dbReference>
<dbReference type="DrugBank" id="DB09118">
    <property type="generic name" value="Stiripentol"/>
</dbReference>
<dbReference type="DrugBank" id="DB00306">
    <property type="generic name" value="Talbutal"/>
</dbReference>
<dbReference type="DrugBank" id="DB01956">
    <property type="generic name" value="Taurine"/>
</dbReference>
<dbReference type="DrugBank" id="DB00231">
    <property type="generic name" value="Temazepam"/>
</dbReference>
<dbReference type="DrugBank" id="DB01154">
    <property type="generic name" value="Thiamylal"/>
</dbReference>
<dbReference type="DrugBank" id="DB11582">
    <property type="generic name" value="Thiocolchicoside"/>
</dbReference>
<dbReference type="DrugBank" id="DB00599">
    <property type="generic name" value="Thiopental"/>
</dbReference>
<dbReference type="DrugBank" id="DB00273">
    <property type="generic name" value="Topiramate"/>
</dbReference>
<dbReference type="DrugBank" id="DB00897">
    <property type="generic name" value="Triazolam"/>
</dbReference>
<dbReference type="DrugBank" id="DB00962">
    <property type="generic name" value="Zaleplon"/>
</dbReference>
<dbReference type="DrugBank" id="DB17063">
    <property type="generic name" value="ZK-93423"/>
</dbReference>
<dbReference type="DrugBank" id="DB00425">
    <property type="generic name" value="Zolpidem"/>
</dbReference>
<dbReference type="DrugBank" id="DB00909">
    <property type="generic name" value="Zonisamide"/>
</dbReference>
<dbReference type="DrugBank" id="DB01198">
    <property type="generic name" value="Zopiclone"/>
</dbReference>
<dbReference type="DrugBank" id="DB15490">
    <property type="generic name" value="Zuranolone"/>
</dbReference>
<dbReference type="DrugCentral" id="P14867"/>
<dbReference type="GuidetoPHARMACOLOGY" id="404"/>
<dbReference type="TCDB" id="1.A.9.5.4">
    <property type="family name" value="the neurotransmitter receptor, cys loop, ligand-gated ion channel (lic) family"/>
</dbReference>
<dbReference type="GlyCosmos" id="P14867">
    <property type="glycosylation" value="2 sites, No reported glycans"/>
</dbReference>
<dbReference type="GlyGen" id="P14867">
    <property type="glycosylation" value="2 sites, 1 N-linked glycan (1 site)"/>
</dbReference>
<dbReference type="iPTMnet" id="P14867"/>
<dbReference type="PhosphoSitePlus" id="P14867"/>
<dbReference type="BioMuta" id="GABRA1"/>
<dbReference type="DMDM" id="27808653"/>
<dbReference type="jPOST" id="P14867"/>
<dbReference type="MassIVE" id="P14867"/>
<dbReference type="PaxDb" id="9606-ENSP00000393097"/>
<dbReference type="PeptideAtlas" id="P14867"/>
<dbReference type="ProteomicsDB" id="53091"/>
<dbReference type="ABCD" id="P14867">
    <property type="antibodies" value="4 sequenced antibodies"/>
</dbReference>
<dbReference type="Antibodypedia" id="4533">
    <property type="antibodies" value="499 antibodies from 44 providers"/>
</dbReference>
<dbReference type="DNASU" id="2554"/>
<dbReference type="Ensembl" id="ENST00000023897.10">
    <property type="protein sequence ID" value="ENSP00000023897.6"/>
    <property type="gene ID" value="ENSG00000022355.18"/>
</dbReference>
<dbReference type="Ensembl" id="ENST00000393943.10">
    <property type="protein sequence ID" value="ENSP00000377517.4"/>
    <property type="gene ID" value="ENSG00000022355.18"/>
</dbReference>
<dbReference type="Ensembl" id="ENST00000428797.7">
    <property type="protein sequence ID" value="ENSP00000393097.2"/>
    <property type="gene ID" value="ENSG00000022355.18"/>
</dbReference>
<dbReference type="Ensembl" id="ENST00000437025.6">
    <property type="protein sequence ID" value="ENSP00000415441.2"/>
    <property type="gene ID" value="ENSG00000022355.18"/>
</dbReference>
<dbReference type="Ensembl" id="ENST00000635880.1">
    <property type="protein sequence ID" value="ENSP00000489738.1"/>
    <property type="gene ID" value="ENSG00000022355.18"/>
</dbReference>
<dbReference type="Ensembl" id="ENST00000636573.1">
    <property type="protein sequence ID" value="ENSP00000490320.1"/>
    <property type="gene ID" value="ENSG00000022355.18"/>
</dbReference>
<dbReference type="Ensembl" id="ENST00000637827.1">
    <property type="protein sequence ID" value="ENSP00000490804.1"/>
    <property type="gene ID" value="ENSG00000022355.18"/>
</dbReference>
<dbReference type="Ensembl" id="ENST00000638112.1">
    <property type="protein sequence ID" value="ENSP00000489839.1"/>
    <property type="gene ID" value="ENSG00000022355.18"/>
</dbReference>
<dbReference type="GeneID" id="2554"/>
<dbReference type="KEGG" id="hsa:2554"/>
<dbReference type="MANE-Select" id="ENST00000393943.10">
    <property type="protein sequence ID" value="ENSP00000377517.4"/>
    <property type="RefSeq nucleotide sequence ID" value="NM_001127644.2"/>
    <property type="RefSeq protein sequence ID" value="NP_001121116.1"/>
</dbReference>
<dbReference type="UCSC" id="uc003lyx.5">
    <property type="organism name" value="human"/>
</dbReference>
<dbReference type="AGR" id="HGNC:4075"/>
<dbReference type="CTD" id="2554"/>
<dbReference type="DisGeNET" id="2554"/>
<dbReference type="GeneCards" id="GABRA1"/>
<dbReference type="HGNC" id="HGNC:4075">
    <property type="gene designation" value="GABRA1"/>
</dbReference>
<dbReference type="HPA" id="ENSG00000022355">
    <property type="expression patterns" value="Group enriched (brain, retina)"/>
</dbReference>
<dbReference type="MalaCards" id="GABRA1"/>
<dbReference type="MIM" id="137160">
    <property type="type" value="gene"/>
</dbReference>
<dbReference type="MIM" id="611136">
    <property type="type" value="phenotype"/>
</dbReference>
<dbReference type="MIM" id="615744">
    <property type="type" value="phenotype"/>
</dbReference>
<dbReference type="neXtProt" id="NX_P14867"/>
<dbReference type="OpenTargets" id="ENSG00000022355"/>
<dbReference type="Orphanet" id="64280">
    <property type="disease" value="Childhood absence epilepsy"/>
</dbReference>
<dbReference type="Orphanet" id="33069">
    <property type="disease" value="Dravet syndrome"/>
</dbReference>
<dbReference type="Orphanet" id="307">
    <property type="disease" value="Juvenile myoclonic epilepsy"/>
</dbReference>
<dbReference type="PharmGKB" id="PA28489"/>
<dbReference type="VEuPathDB" id="HostDB:ENSG00000022355"/>
<dbReference type="eggNOG" id="KOG3642">
    <property type="taxonomic scope" value="Eukaryota"/>
</dbReference>
<dbReference type="GeneTree" id="ENSGT00940000159136"/>
<dbReference type="HOGENOM" id="CLU_010920_2_1_1"/>
<dbReference type="InParanoid" id="P14867"/>
<dbReference type="OMA" id="YLWAYLF"/>
<dbReference type="OrthoDB" id="203862at2759"/>
<dbReference type="PAN-GO" id="P14867">
    <property type="GO annotations" value="19 GO annotations based on evolutionary models"/>
</dbReference>
<dbReference type="PhylomeDB" id="P14867"/>
<dbReference type="TreeFam" id="TF315453"/>
<dbReference type="PathwayCommons" id="P14867"/>
<dbReference type="Reactome" id="R-HSA-1236394">
    <property type="pathway name" value="Signaling by ERBB4"/>
</dbReference>
<dbReference type="Reactome" id="R-HSA-977443">
    <property type="pathway name" value="GABA receptor activation"/>
</dbReference>
<dbReference type="SignaLink" id="P14867"/>
<dbReference type="SIGNOR" id="P14867"/>
<dbReference type="BioGRID-ORCS" id="2554">
    <property type="hits" value="8 hits in 1150 CRISPR screens"/>
</dbReference>
<dbReference type="CD-CODE" id="FB4E32DD">
    <property type="entry name" value="Presynaptic clusters and postsynaptic densities"/>
</dbReference>
<dbReference type="ChiTaRS" id="GABRA1">
    <property type="organism name" value="human"/>
</dbReference>
<dbReference type="GeneWiki" id="Gamma-aminobutyric_acid_(GABA)_A_receptor,_alpha_1"/>
<dbReference type="GeneWiki" id="Gamma-aminobutyric_acid_receptor_subunit_alpha-1"/>
<dbReference type="GenomeRNAi" id="2554"/>
<dbReference type="Pharos" id="P14867">
    <property type="development level" value="Tclin"/>
</dbReference>
<dbReference type="PRO" id="PR:P14867"/>
<dbReference type="Proteomes" id="UP000005640">
    <property type="component" value="Chromosome 5"/>
</dbReference>
<dbReference type="RNAct" id="P14867">
    <property type="molecule type" value="protein"/>
</dbReference>
<dbReference type="Bgee" id="ENSG00000022355">
    <property type="expression patterns" value="Expressed in lateral nuclear group of thalamus and 105 other cell types or tissues"/>
</dbReference>
<dbReference type="ExpressionAtlas" id="P14867">
    <property type="expression patterns" value="baseline and differential"/>
</dbReference>
<dbReference type="GO" id="GO:0034707">
    <property type="term" value="C:chloride channel complex"/>
    <property type="evidence" value="ECO:0007669"/>
    <property type="project" value="UniProtKB-KW"/>
</dbReference>
<dbReference type="GO" id="GO:0030659">
    <property type="term" value="C:cytoplasmic vesicle membrane"/>
    <property type="evidence" value="ECO:0007669"/>
    <property type="project" value="UniProtKB-SubCell"/>
</dbReference>
<dbReference type="GO" id="GO:0032590">
    <property type="term" value="C:dendrite membrane"/>
    <property type="evidence" value="ECO:0000318"/>
    <property type="project" value="GO_Central"/>
</dbReference>
<dbReference type="GO" id="GO:0043197">
    <property type="term" value="C:dendritic spine"/>
    <property type="evidence" value="ECO:0000314"/>
    <property type="project" value="UniProt"/>
</dbReference>
<dbReference type="GO" id="GO:1902710">
    <property type="term" value="C:GABA receptor complex"/>
    <property type="evidence" value="ECO:0000250"/>
    <property type="project" value="BHF-UCL"/>
</dbReference>
<dbReference type="GO" id="GO:1902711">
    <property type="term" value="C:GABA-A receptor complex"/>
    <property type="evidence" value="ECO:0000314"/>
    <property type="project" value="UniProtKB"/>
</dbReference>
<dbReference type="GO" id="GO:0098982">
    <property type="term" value="C:GABA-ergic synapse"/>
    <property type="evidence" value="ECO:0007669"/>
    <property type="project" value="Ensembl"/>
</dbReference>
<dbReference type="GO" id="GO:0005886">
    <property type="term" value="C:plasma membrane"/>
    <property type="evidence" value="ECO:0000250"/>
    <property type="project" value="BHF-UCL"/>
</dbReference>
<dbReference type="GO" id="GO:0098794">
    <property type="term" value="C:postsynapse"/>
    <property type="evidence" value="ECO:0000318"/>
    <property type="project" value="GO_Central"/>
</dbReference>
<dbReference type="GO" id="GO:0099634">
    <property type="term" value="C:postsynaptic specialization membrane"/>
    <property type="evidence" value="ECO:0000250"/>
    <property type="project" value="UniProtKB"/>
</dbReference>
<dbReference type="GO" id="GO:0004890">
    <property type="term" value="F:GABA-A receptor activity"/>
    <property type="evidence" value="ECO:0000314"/>
    <property type="project" value="UniProtKB"/>
</dbReference>
<dbReference type="GO" id="GO:0022851">
    <property type="term" value="F:GABA-gated chloride ion channel activity"/>
    <property type="evidence" value="ECO:0000314"/>
    <property type="project" value="UniProtKB"/>
</dbReference>
<dbReference type="GO" id="GO:1904315">
    <property type="term" value="F:transmitter-gated monoatomic ion channel activity involved in regulation of postsynaptic membrane potential"/>
    <property type="evidence" value="ECO:0007669"/>
    <property type="project" value="Ensembl"/>
</dbReference>
<dbReference type="GO" id="GO:1902476">
    <property type="term" value="P:chloride transmembrane transport"/>
    <property type="evidence" value="ECO:0000314"/>
    <property type="project" value="GO_Central"/>
</dbReference>
<dbReference type="GO" id="GO:0007214">
    <property type="term" value="P:gamma-aminobutyric acid signaling pathway"/>
    <property type="evidence" value="ECO:0000314"/>
    <property type="project" value="ComplexPortal"/>
</dbReference>
<dbReference type="GO" id="GO:1904862">
    <property type="term" value="P:inhibitory synapse assembly"/>
    <property type="evidence" value="ECO:0000314"/>
    <property type="project" value="UniProtKB"/>
</dbReference>
<dbReference type="GO" id="GO:0051932">
    <property type="term" value="P:synaptic transmission, GABAergic"/>
    <property type="evidence" value="ECO:0000314"/>
    <property type="project" value="UniProt"/>
</dbReference>
<dbReference type="CDD" id="cd19034">
    <property type="entry name" value="LGIC_ECD_GABAAR_A1"/>
    <property type="match status" value="1"/>
</dbReference>
<dbReference type="CDD" id="cd19052">
    <property type="entry name" value="LGIC_TM_GABAAR_alpha"/>
    <property type="match status" value="1"/>
</dbReference>
<dbReference type="FunFam" id="2.70.170.10:FF:000001">
    <property type="entry name" value="Gamma-aminobutyric acid A receptor subunit alpha-2"/>
    <property type="match status" value="1"/>
</dbReference>
<dbReference type="FunFam" id="1.20.58.390:FF:000002">
    <property type="entry name" value="Putative gamma-aminobutyric acid receptor subunit alpha-5"/>
    <property type="match status" value="1"/>
</dbReference>
<dbReference type="Gene3D" id="2.70.170.10">
    <property type="entry name" value="Neurotransmitter-gated ion-channel ligand-binding domain"/>
    <property type="match status" value="1"/>
</dbReference>
<dbReference type="Gene3D" id="1.20.58.390">
    <property type="entry name" value="Neurotransmitter-gated ion-channel transmembrane domain"/>
    <property type="match status" value="1"/>
</dbReference>
<dbReference type="InterPro" id="IPR006028">
    <property type="entry name" value="GABAA/Glycine_rcpt"/>
</dbReference>
<dbReference type="InterPro" id="IPR001390">
    <property type="entry name" value="GABAAa_rcpt"/>
</dbReference>
<dbReference type="InterPro" id="IPR005431">
    <property type="entry name" value="GABBAa1_rcpt"/>
</dbReference>
<dbReference type="InterPro" id="IPR047024">
    <property type="entry name" value="Gabra-1-6_TM"/>
</dbReference>
<dbReference type="InterPro" id="IPR047079">
    <property type="entry name" value="GABRA1_ECD"/>
</dbReference>
<dbReference type="InterPro" id="IPR006202">
    <property type="entry name" value="Neur_chan_lig-bd"/>
</dbReference>
<dbReference type="InterPro" id="IPR036734">
    <property type="entry name" value="Neur_chan_lig-bd_sf"/>
</dbReference>
<dbReference type="InterPro" id="IPR006201">
    <property type="entry name" value="Neur_channel"/>
</dbReference>
<dbReference type="InterPro" id="IPR036719">
    <property type="entry name" value="Neuro-gated_channel_TM_sf"/>
</dbReference>
<dbReference type="InterPro" id="IPR038050">
    <property type="entry name" value="Neuro_actylchol_rec"/>
</dbReference>
<dbReference type="InterPro" id="IPR006029">
    <property type="entry name" value="Neurotrans-gated_channel_TM"/>
</dbReference>
<dbReference type="InterPro" id="IPR018000">
    <property type="entry name" value="Neurotransmitter_ion_chnl_CS"/>
</dbReference>
<dbReference type="NCBIfam" id="TIGR00860">
    <property type="entry name" value="LIC"/>
    <property type="match status" value="1"/>
</dbReference>
<dbReference type="PANTHER" id="PTHR18945">
    <property type="entry name" value="NEUROTRANSMITTER GATED ION CHANNEL"/>
    <property type="match status" value="1"/>
</dbReference>
<dbReference type="Pfam" id="PF02931">
    <property type="entry name" value="Neur_chan_LBD"/>
    <property type="match status" value="1"/>
</dbReference>
<dbReference type="Pfam" id="PF02932">
    <property type="entry name" value="Neur_chan_memb"/>
    <property type="match status" value="2"/>
</dbReference>
<dbReference type="PRINTS" id="PR01079">
    <property type="entry name" value="GABAARALPHA"/>
</dbReference>
<dbReference type="PRINTS" id="PR01614">
    <property type="entry name" value="GABAARALPHA1"/>
</dbReference>
<dbReference type="PRINTS" id="PR00253">
    <property type="entry name" value="GABAARECEPTR"/>
</dbReference>
<dbReference type="PRINTS" id="PR00252">
    <property type="entry name" value="NRIONCHANNEL"/>
</dbReference>
<dbReference type="SUPFAM" id="SSF90112">
    <property type="entry name" value="Neurotransmitter-gated ion-channel transmembrane pore"/>
    <property type="match status" value="1"/>
</dbReference>
<dbReference type="SUPFAM" id="SSF63712">
    <property type="entry name" value="Nicotinic receptor ligand binding domain-like"/>
    <property type="match status" value="1"/>
</dbReference>
<dbReference type="PROSITE" id="PS00236">
    <property type="entry name" value="NEUROTR_ION_CHANNEL"/>
    <property type="match status" value="1"/>
</dbReference>
<evidence type="ECO:0000250" key="1">
    <source>
        <dbReference type="UniProtKB" id="P08219"/>
    </source>
</evidence>
<evidence type="ECO:0000250" key="2">
    <source>
        <dbReference type="UniProtKB" id="P62812"/>
    </source>
</evidence>
<evidence type="ECO:0000250" key="3">
    <source>
        <dbReference type="UniProtKB" id="P62813"/>
    </source>
</evidence>
<evidence type="ECO:0000255" key="4"/>
<evidence type="ECO:0000269" key="5">
    <source>
    </source>
</evidence>
<evidence type="ECO:0000269" key="6">
    <source>
    </source>
</evidence>
<evidence type="ECO:0000269" key="7">
    <source>
    </source>
</evidence>
<evidence type="ECO:0000269" key="8">
    <source>
    </source>
</evidence>
<evidence type="ECO:0000269" key="9">
    <source>
    </source>
</evidence>
<evidence type="ECO:0000269" key="10">
    <source>
    </source>
</evidence>
<evidence type="ECO:0000269" key="11">
    <source>
    </source>
</evidence>
<evidence type="ECO:0000269" key="12">
    <source>
    </source>
</evidence>
<evidence type="ECO:0000269" key="13">
    <source>
    </source>
</evidence>
<evidence type="ECO:0000269" key="14">
    <source>
    </source>
</evidence>
<evidence type="ECO:0000269" key="15">
    <source>
    </source>
</evidence>
<evidence type="ECO:0000269" key="16">
    <source>
    </source>
</evidence>
<evidence type="ECO:0000269" key="17">
    <source>
    </source>
</evidence>
<evidence type="ECO:0000303" key="18">
    <source>
    </source>
</evidence>
<evidence type="ECO:0000303" key="19">
    <source>
    </source>
</evidence>
<evidence type="ECO:0000305" key="20"/>
<evidence type="ECO:0000312" key="21">
    <source>
        <dbReference type="HGNC" id="HGNC:4075"/>
    </source>
</evidence>
<evidence type="ECO:0007744" key="22">
    <source>
        <dbReference type="PDB" id="6CDU"/>
    </source>
</evidence>
<evidence type="ECO:0007744" key="23">
    <source>
        <dbReference type="PDB" id="6D1S"/>
    </source>
</evidence>
<evidence type="ECO:0007744" key="24">
    <source>
        <dbReference type="PDB" id="6D6T"/>
    </source>
</evidence>
<evidence type="ECO:0007744" key="25">
    <source>
        <dbReference type="PDB" id="6D6U"/>
    </source>
</evidence>
<evidence type="ECO:0007744" key="26">
    <source>
        <dbReference type="PDB" id="6I53"/>
    </source>
</evidence>
<evidence type="ECO:0007829" key="27">
    <source>
        <dbReference type="PDB" id="6I53"/>
    </source>
</evidence>
<evidence type="ECO:0007829" key="28">
    <source>
        <dbReference type="PDB" id="6X3T"/>
    </source>
</evidence>
<evidence type="ECO:0007829" key="29">
    <source>
        <dbReference type="PDB" id="8SGO"/>
    </source>
</evidence>
<reference key="1">
    <citation type="journal article" date="1989" name="FEBS Lett.">
        <title>Sequence and expression of human GABAA receptor alpha 1 and beta 1 subunits.</title>
        <authorList>
            <person name="Schofield P.R."/>
            <person name="Pritchett D.B."/>
            <person name="Sontheimer H."/>
            <person name="Kettenmann H."/>
            <person name="Seeburg P.H."/>
        </authorList>
    </citation>
    <scope>NUCLEOTIDE SEQUENCE [MRNA]</scope>
    <scope>SUBCELLULAR LOCATION</scope>
</reference>
<reference key="2">
    <citation type="submission" date="2005-09" db="EMBL/GenBank/DDBJ databases">
        <authorList>
            <person name="Mural R.J."/>
            <person name="Istrail S."/>
            <person name="Sutton G.G."/>
            <person name="Florea L."/>
            <person name="Halpern A.L."/>
            <person name="Mobarry C.M."/>
            <person name="Lippert R."/>
            <person name="Walenz B."/>
            <person name="Shatkay H."/>
            <person name="Dew I."/>
            <person name="Miller J.R."/>
            <person name="Flanigan M.J."/>
            <person name="Edwards N.J."/>
            <person name="Bolanos R."/>
            <person name="Fasulo D."/>
            <person name="Halldorsson B.V."/>
            <person name="Hannenhalli S."/>
            <person name="Turner R."/>
            <person name="Yooseph S."/>
            <person name="Lu F."/>
            <person name="Nusskern D.R."/>
            <person name="Shue B.C."/>
            <person name="Zheng X.H."/>
            <person name="Zhong F."/>
            <person name="Delcher A.L."/>
            <person name="Huson D.H."/>
            <person name="Kravitz S.A."/>
            <person name="Mouchard L."/>
            <person name="Reinert K."/>
            <person name="Remington K.A."/>
            <person name="Clark A.G."/>
            <person name="Waterman M.S."/>
            <person name="Eichler E.E."/>
            <person name="Adams M.D."/>
            <person name="Hunkapiller M.W."/>
            <person name="Myers E.W."/>
            <person name="Venter J.C."/>
        </authorList>
    </citation>
    <scope>NUCLEOTIDE SEQUENCE [LARGE SCALE GENOMIC DNA]</scope>
</reference>
<reference key="3">
    <citation type="journal article" date="2004" name="Genome Res.">
        <title>The status, quality, and expansion of the NIH full-length cDNA project: the Mammalian Gene Collection (MGC).</title>
        <authorList>
            <consortium name="The MGC Project Team"/>
        </authorList>
    </citation>
    <scope>NUCLEOTIDE SEQUENCE [LARGE SCALE MRNA]</scope>
    <source>
        <tissue>Brain</tissue>
    </source>
</reference>
<reference key="4">
    <citation type="journal article" date="1988" name="Biochem. Biophys. Res. Commun.">
        <title>Isolation of a cDNA clone for the alpha subunit of the human GABA-A receptor.</title>
        <authorList>
            <person name="Garrett K.M."/>
            <person name="Duman R.S."/>
            <person name="Saito N."/>
            <person name="Blume A.J."/>
            <person name="Vitek M.P."/>
            <person name="Tallman J.F."/>
        </authorList>
    </citation>
    <scope>NUCLEOTIDE SEQUENCE [MRNA] OF 1-365</scope>
    <source>
        <tissue>Cerebellum</tissue>
    </source>
</reference>
<reference key="5">
    <citation type="journal article" date="2013" name="Eur. J. Neurosci.">
        <title>GABA(A) receptors can initiate the formation of functional inhibitory GABAergic synapses.</title>
        <authorList>
            <person name="Fuchs C."/>
            <person name="Abitbol K."/>
            <person name="Burden J.J."/>
            <person name="Mercer A."/>
            <person name="Brown L."/>
            <person name="Iball J."/>
            <person name="Anne Stephenson F."/>
            <person name="Thomson A.M."/>
            <person name="Jovanovic J.N."/>
        </authorList>
    </citation>
    <scope>FUNCTION</scope>
    <scope>TRANSPORTER ACTIVITY</scope>
</reference>
<reference key="6">
    <citation type="journal article" date="2014" name="J. Vis. Exp.">
        <title>Inhibitory synapse formation in a co-culture model incorporating GABAergic medium spiny neurons and HEK293 cells stably expressing GABAA receptors.</title>
        <authorList>
            <person name="Brown L.E."/>
            <person name="Fuchs C."/>
            <person name="Nicholson M.W."/>
            <person name="Stephenson F.A."/>
            <person name="Thomson A.M."/>
            <person name="Jovanovic J.N."/>
        </authorList>
    </citation>
    <scope>FUNCTION</scope>
    <scope>SUBCELLULAR LOCATION</scope>
</reference>
<reference key="7">
    <citation type="journal article" date="2017" name="Cell Rep.">
        <title>An essential role for the tetraspanin LHFPL4 in the cell-type-specific targeting and clustering of synaptic GABAA ceceptors.</title>
        <authorList>
            <person name="Davenport E.C."/>
            <person name="Pendolino V."/>
            <person name="Kontou G."/>
            <person name="McGee T.P."/>
            <person name="Sheehan D.F."/>
            <person name="Lopez-Domenech G."/>
            <person name="Farrant M."/>
            <person name="Kittler J.T."/>
        </authorList>
    </citation>
    <scope>INTERACTION WITH LHFPL4</scope>
</reference>
<reference key="8">
    <citation type="journal article" date="2018" name="Cell Rep.">
        <title>Impairment of inhibitory synapse formation and motor behavior in mice lacking the NL2 binding partner LHFPL4/GARLH4.</title>
        <authorList>
            <person name="Wu M."/>
            <person name="Tian H.L."/>
            <person name="Liu X."/>
            <person name="Lai J.H.C."/>
            <person name="Du S."/>
            <person name="Xia J."/>
        </authorList>
    </citation>
    <scope>INTERACTION WITH LHFLP4</scope>
</reference>
<reference evidence="24 25" key="9">
    <citation type="journal article" date="2018" name="Nature">
        <title>Structure of a human synaptic GABAA receptor.</title>
        <authorList>
            <person name="Zhu S."/>
            <person name="Noviello C.M."/>
            <person name="Teng J."/>
            <person name="Walsh R.M. Jr."/>
            <person name="Kim J.J."/>
            <person name="Hibbs R.E."/>
        </authorList>
    </citation>
    <scope>STRUCTURE BY ELECTRON MICROSCOPY (3.80 ANGSTROMS) OF 28-456 IN COMPLEX WITH GABA AND FLUMAZENIL</scope>
    <scope>FUNCTION</scope>
    <scope>TRANSPORTER ACTIVITY</scope>
    <scope>ACTIVITY REGULATION</scope>
    <scope>SUBUNIT</scope>
    <scope>INTERACTION WITH GABRB2 AND GABRG2</scope>
    <scope>SUBCELLULAR LOCATION</scope>
    <scope>DOMAIN</scope>
    <scope>DISULFIDE BOND</scope>
    <scope>GLYCOSYLATION AT ASN-138</scope>
</reference>
<reference evidence="22 23" key="10">
    <citation type="journal article" date="2018" name="Nat. Commun.">
        <title>Structural basis of neurosteroid anesthetic action on GABAA receptors.</title>
        <authorList>
            <person name="Chen Q."/>
            <person name="Wells M.M."/>
            <person name="Arjunan P."/>
            <person name="Tillman T.S."/>
            <person name="Cohen A.E."/>
            <person name="Xu Y."/>
            <person name="Tang P."/>
        </authorList>
    </citation>
    <scope>X-RAY CRYSTALLOGRAPHY (3.20 ANGSTROMS) OF 249-444 OF APOPROTEIN AND IN COMPLEX WITH AGONIST ALPHAXALONE</scope>
    <scope>ACTIVITY REGULATION</scope>
    <scope>BINDING TO AGONIST ALPHAXALONE</scope>
    <scope>SUBUNIT</scope>
    <scope>MUTAGENESIS OF GLN-269; TRP-273 AND THR-333</scope>
</reference>
<reference evidence="26" key="11">
    <citation type="journal article" date="2019" name="Nature">
        <title>Cryo-EM structure of the human alpha1beta3gamma2 GABAA receptor in a lipid bilayer.</title>
        <authorList>
            <person name="Laverty D."/>
            <person name="Desai R."/>
            <person name="Uchanski T."/>
            <person name="Masiulis S."/>
            <person name="Stec W.J."/>
            <person name="Malinauskas T."/>
            <person name="Zivanov J."/>
            <person name="Pardon E."/>
            <person name="Steyaert J."/>
            <person name="Miller K.W."/>
            <person name="Aricescu A.R."/>
        </authorList>
    </citation>
    <scope>STRUCTURE BY ELECTRON MICROSCOPY (3.20 ANGSTROMS)</scope>
    <scope>FUNCTION</scope>
    <scope>TRANSPORTER ACTIVITY</scope>
    <scope>SUBUNIT</scope>
    <scope>INTERACTION WITH GABRB3 AND GABRG2</scope>
    <scope>DISULFIDE BOND</scope>
    <scope>GLYCOSYLATION AT ASN-138</scope>
</reference>
<reference key="12">
    <citation type="journal article" date="2011" name="Eur. J. Neurosci.">
        <title>Novel alpha1 and gamma2 GABAA receptor subunit mutations in families with idiopathic generalized epilepsy.</title>
        <authorList>
            <person name="Lachance-Touchette P."/>
            <person name="Brown P."/>
            <person name="Meloche C."/>
            <person name="Kinirons P."/>
            <person name="Lapointe L."/>
            <person name="Lacasse H."/>
            <person name="Lortie A."/>
            <person name="Carmant L."/>
            <person name="Bedford F."/>
            <person name="Bowie D."/>
            <person name="Cossette P."/>
        </authorList>
    </citation>
    <scope>INVOLVEMENT IN EIG13</scope>
    <scope>VARIANT EIG13 ASN-219</scope>
    <scope>CHARACTERIZATION OF VARIANT EIG13 ASN-219</scope>
</reference>
<reference key="13">
    <citation type="journal article" date="2014" name="Neurology">
        <title>GABRA1 and STXBP1: novel genetic causes of Dravet syndrome.</title>
        <authorList>
            <person name="Carvill G.L."/>
            <person name="Weckhuysen S."/>
            <person name="McMahon J.M."/>
            <person name="Hartmann C."/>
            <person name="Moller R.S."/>
            <person name="Hjalgrim H."/>
            <person name="Cook J."/>
            <person name="Geraghty E."/>
            <person name="O'Roak B.J."/>
            <person name="Petrou S."/>
            <person name="Clarke A."/>
            <person name="Gill D."/>
            <person name="Sadleir L.G."/>
            <person name="Muhle H."/>
            <person name="von Spiczak S."/>
            <person name="Nikanorova M."/>
            <person name="Hodgson B.L."/>
            <person name="Gazina E.V."/>
            <person name="Suls A."/>
            <person name="Shendure J."/>
            <person name="Dibbens L.M."/>
            <person name="De Jonghe P."/>
            <person name="Helbig I."/>
            <person name="Berkovic S.F."/>
            <person name="Scheffer I.E."/>
            <person name="Mefford H.C."/>
        </authorList>
    </citation>
    <scope>INVOLVEMENT IN DEE19</scope>
    <scope>VARIANTS DEE19 GLN-112; SER-251 AND THR-306</scope>
</reference>
<reference key="14">
    <citation type="journal article" date="2002" name="Nat. Genet.">
        <title>Mutation of GABRA1 in an autosomal dominant form of juvenile myoclonic epilepsy.</title>
        <authorList>
            <person name="Cossette P."/>
            <person name="Liu L."/>
            <person name="Brisebois K."/>
            <person name="Dong H."/>
            <person name="Lortie A."/>
            <person name="Vanasse M."/>
            <person name="Saint-Hilaire J.-M."/>
            <person name="Carmant L."/>
            <person name="Verner A."/>
            <person name="Lu W.-Y."/>
            <person name="Tian Wang Y."/>
            <person name="Rouleau G.A."/>
        </authorList>
    </citation>
    <scope>VARIANT EJM5 ASP-322</scope>
</reference>
<reference key="15">
    <citation type="journal article" date="2006" name="Ann. Neurol.">
        <title>A mutation in the GABA(A) receptor alpha(1)-subunit is associated with absence epilepsy.</title>
        <authorList>
            <person name="Maljevic S."/>
            <person name="Krampfl K."/>
            <person name="Cobilanschi J."/>
            <person name="Tilgen N."/>
            <person name="Beyer S."/>
            <person name="Weber Y.G."/>
            <person name="Schlesinger F."/>
            <person name="Ursu D."/>
            <person name="Melzer W."/>
            <person name="Cossette P."/>
            <person name="Bufler J."/>
            <person name="Lerche H."/>
            <person name="Heils A."/>
        </authorList>
    </citation>
    <scope>INVOLVEMENT IN ECA4</scope>
</reference>
<reference key="16">
    <citation type="journal article" date="2017" name="Hum. Mutat.">
        <title>Diagnostic targeted resequencing in 349 patients with drug-resistant pediatric epilepsies identifies causative mutations in 30 different genes.</title>
        <authorList>
            <consortium name="Clinical Study Group"/>
            <person name="Parrini E."/>
            <person name="Marini C."/>
            <person name="Mei D."/>
            <person name="Galuppi A."/>
            <person name="Cellini E."/>
            <person name="Pucatti D."/>
            <person name="Chiti L."/>
            <person name="Rutigliano D."/>
            <person name="Bianchini C."/>
            <person name="Virdo S."/>
            <person name="De Vita D."/>
            <person name="Bigoni S."/>
            <person name="Barba C."/>
            <person name="Mari F."/>
            <person name="Montomoli M."/>
            <person name="Pisano T."/>
            <person name="Rosati A."/>
            <person name="Guerrini R."/>
        </authorList>
    </citation>
    <scope>VARIANT DEE19 MET-146</scope>
</reference>
<organism>
    <name type="scientific">Homo sapiens</name>
    <name type="common">Human</name>
    <dbReference type="NCBI Taxonomy" id="9606"/>
    <lineage>
        <taxon>Eukaryota</taxon>
        <taxon>Metazoa</taxon>
        <taxon>Chordata</taxon>
        <taxon>Craniata</taxon>
        <taxon>Vertebrata</taxon>
        <taxon>Euteleostomi</taxon>
        <taxon>Mammalia</taxon>
        <taxon>Eutheria</taxon>
        <taxon>Euarchontoglires</taxon>
        <taxon>Primates</taxon>
        <taxon>Haplorrhini</taxon>
        <taxon>Catarrhini</taxon>
        <taxon>Hominidae</taxon>
        <taxon>Homo</taxon>
    </lineage>
</organism>
<proteinExistence type="evidence at protein level"/>
<accession>P14867</accession>
<accession>D3DQK6</accession>
<accession>Q8N629</accession>
<name>GBRA1_HUMAN</name>
<sequence length="456" mass="51802">MRKSPGLSDCLWAWILLLSTLTGRSYGQPSLQDELKDNTTVFTRILDRLLDGYDNRLRPGLGERVTEVKTDIFVTSFGPVSDHDMEYTIDVFFRQSWKDERLKFKGPMTVLRLNNLMASKIWTPDTFFHNGKKSVAHNMTMPNKLLRITEDGTLLYTMRLTVRAECPMHLEDFPMDAHACPLKFGSYAYTRAEVVYEWTREPARSVVVAEDGSRLNQYDLLGQTVDSGIVQSSTGEYVVMTTHFHLKRKIGYFVIQTYLPCIMTVILSQVSFWLNRESVPARTVFGVTTVLTMTTLSISARNSLPKVAYATAMDWFIAVCYAFVFSALIEFATVNYFTKRGYAWDGKSVVPEKPKKVKDPLIKKNNTYAPTATSYTPNLARGDPGLATIAKSATIEPKEVKPETKPPEPKKTFNSVSKIDRLSRIAFPLLFGIFNLVYWATYLNREPQLKAPTPHQ</sequence>